<accession>A0QND3</accession>
<name>YIDD_MYCA1</name>
<sequence length="115" mass="12426">MTGPARSGAAIRGAGRTVARGLIFLIQLYRHMVSPLRPATCRFVPTCSQYAVDALDEYGLIRGSWLAAARLTKCGPWHQGGWDPIPERPGCRVNCQDASDAWAVRATRGESGSLV</sequence>
<reference key="1">
    <citation type="submission" date="2006-10" db="EMBL/GenBank/DDBJ databases">
        <authorList>
            <person name="Fleischmann R.D."/>
            <person name="Dodson R.J."/>
            <person name="Haft D.H."/>
            <person name="Merkel J.S."/>
            <person name="Nelson W.C."/>
            <person name="Fraser C.M."/>
        </authorList>
    </citation>
    <scope>NUCLEOTIDE SEQUENCE [LARGE SCALE GENOMIC DNA]</scope>
    <source>
        <strain>104</strain>
    </source>
</reference>
<keyword id="KW-1003">Cell membrane</keyword>
<keyword id="KW-0472">Membrane</keyword>
<protein>
    <recommendedName>
        <fullName evidence="1">Putative membrane protein insertion efficiency factor</fullName>
    </recommendedName>
</protein>
<evidence type="ECO:0000255" key="1">
    <source>
        <dbReference type="HAMAP-Rule" id="MF_00386"/>
    </source>
</evidence>
<proteinExistence type="inferred from homology"/>
<gene>
    <name type="ordered locus">MAV_5311</name>
</gene>
<feature type="chain" id="PRO_1000013102" description="Putative membrane protein insertion efficiency factor">
    <location>
        <begin position="1"/>
        <end position="115"/>
    </location>
</feature>
<dbReference type="EMBL" id="CP000479">
    <property type="protein sequence ID" value="ABK68171.1"/>
    <property type="molecule type" value="Genomic_DNA"/>
</dbReference>
<dbReference type="KEGG" id="mav:MAV_5311"/>
<dbReference type="HOGENOM" id="CLU_144811_2_1_11"/>
<dbReference type="Proteomes" id="UP000001574">
    <property type="component" value="Chromosome"/>
</dbReference>
<dbReference type="GO" id="GO:0005886">
    <property type="term" value="C:plasma membrane"/>
    <property type="evidence" value="ECO:0007669"/>
    <property type="project" value="UniProtKB-SubCell"/>
</dbReference>
<dbReference type="HAMAP" id="MF_00386">
    <property type="entry name" value="UPF0161_YidD"/>
    <property type="match status" value="1"/>
</dbReference>
<dbReference type="InterPro" id="IPR002696">
    <property type="entry name" value="Membr_insert_effic_factor_YidD"/>
</dbReference>
<dbReference type="NCBIfam" id="TIGR00278">
    <property type="entry name" value="membrane protein insertion efficiency factor YidD"/>
    <property type="match status" value="1"/>
</dbReference>
<dbReference type="PANTHER" id="PTHR33383">
    <property type="entry name" value="MEMBRANE PROTEIN INSERTION EFFICIENCY FACTOR-RELATED"/>
    <property type="match status" value="1"/>
</dbReference>
<dbReference type="PANTHER" id="PTHR33383:SF1">
    <property type="entry name" value="MEMBRANE PROTEIN INSERTION EFFICIENCY FACTOR-RELATED"/>
    <property type="match status" value="1"/>
</dbReference>
<dbReference type="Pfam" id="PF01809">
    <property type="entry name" value="YidD"/>
    <property type="match status" value="1"/>
</dbReference>
<dbReference type="SMART" id="SM01234">
    <property type="entry name" value="Haemolytic"/>
    <property type="match status" value="1"/>
</dbReference>
<comment type="function">
    <text evidence="1">Could be involved in insertion of integral membrane proteins into the membrane.</text>
</comment>
<comment type="subcellular location">
    <subcellularLocation>
        <location evidence="1">Cell membrane</location>
        <topology evidence="1">Peripheral membrane protein</topology>
        <orientation evidence="1">Cytoplasmic side</orientation>
    </subcellularLocation>
</comment>
<comment type="similarity">
    <text evidence="1">Belongs to the UPF0161 family.</text>
</comment>
<organism>
    <name type="scientific">Mycobacterium avium (strain 104)</name>
    <dbReference type="NCBI Taxonomy" id="243243"/>
    <lineage>
        <taxon>Bacteria</taxon>
        <taxon>Bacillati</taxon>
        <taxon>Actinomycetota</taxon>
        <taxon>Actinomycetes</taxon>
        <taxon>Mycobacteriales</taxon>
        <taxon>Mycobacteriaceae</taxon>
        <taxon>Mycobacterium</taxon>
        <taxon>Mycobacterium avium complex (MAC)</taxon>
    </lineage>
</organism>